<sequence>MKSTSKIYTDKDSNLDVIKGKRIAVLGYGSQGRAWAQNLRDSGLNVVVGLEREGKSWELAKSDGIIPLHTKDAVKDADIIIFLVPDMVQRTLWLESVQPYMKKGADLVFAHGFNIHYKLIEPPKDSDVYMIAPKGPGPTVREYYKAGGGVPALVAIQQDVSGTALRKALAIAKGIGATRAGVIPTTFKEETETDLFGEQVILVGGIMELMKAAFETLVEEGYQPEVAYFETINELKMLVDLVYEKGITGMLKAVSDTAKYGGMTVGKFVINEDVRKRMKEALQRIKSGKFAEEWVEEYGRGMPTVVNGLSQVQNSLEEKIGNQLKDLIQKGKPKS</sequence>
<keyword id="KW-0028">Amino-acid biosynthesis</keyword>
<keyword id="KW-0100">Branched-chain amino acid biosynthesis</keyword>
<keyword id="KW-0460">Magnesium</keyword>
<keyword id="KW-0479">Metal-binding</keyword>
<keyword id="KW-0521">NADP</keyword>
<keyword id="KW-0560">Oxidoreductase</keyword>
<name>ILVC_SACI2</name>
<accession>C3MQK4</accession>
<feature type="chain" id="PRO_1000206090" description="Ketol-acid reductoisomerase (NADP(+))">
    <location>
        <begin position="1"/>
        <end position="335"/>
    </location>
</feature>
<feature type="domain" description="KARI N-terminal Rossmann" evidence="2">
    <location>
        <begin position="5"/>
        <end position="185"/>
    </location>
</feature>
<feature type="domain" description="KARI C-terminal knotted" evidence="3">
    <location>
        <begin position="186"/>
        <end position="331"/>
    </location>
</feature>
<feature type="active site" evidence="1">
    <location>
        <position position="111"/>
    </location>
</feature>
<feature type="binding site" evidence="1">
    <location>
        <begin position="28"/>
        <end position="31"/>
    </location>
    <ligand>
        <name>NADP(+)</name>
        <dbReference type="ChEBI" id="CHEBI:58349"/>
    </ligand>
</feature>
<feature type="binding site" evidence="1">
    <location>
        <position position="56"/>
    </location>
    <ligand>
        <name>NADP(+)</name>
        <dbReference type="ChEBI" id="CHEBI:58349"/>
    </ligand>
</feature>
<feature type="binding site" evidence="1">
    <location>
        <begin position="86"/>
        <end position="89"/>
    </location>
    <ligand>
        <name>NADP(+)</name>
        <dbReference type="ChEBI" id="CHEBI:58349"/>
    </ligand>
</feature>
<feature type="binding site" evidence="1">
    <location>
        <position position="137"/>
    </location>
    <ligand>
        <name>NADP(+)</name>
        <dbReference type="ChEBI" id="CHEBI:58349"/>
    </ligand>
</feature>
<feature type="binding site" evidence="1">
    <location>
        <position position="194"/>
    </location>
    <ligand>
        <name>Mg(2+)</name>
        <dbReference type="ChEBI" id="CHEBI:18420"/>
        <label>1</label>
    </ligand>
</feature>
<feature type="binding site" evidence="1">
    <location>
        <position position="194"/>
    </location>
    <ligand>
        <name>Mg(2+)</name>
        <dbReference type="ChEBI" id="CHEBI:18420"/>
        <label>2</label>
    </ligand>
</feature>
<feature type="binding site" evidence="1">
    <location>
        <position position="198"/>
    </location>
    <ligand>
        <name>Mg(2+)</name>
        <dbReference type="ChEBI" id="CHEBI:18420"/>
        <label>1</label>
    </ligand>
</feature>
<feature type="binding site" evidence="1">
    <location>
        <position position="230"/>
    </location>
    <ligand>
        <name>Mg(2+)</name>
        <dbReference type="ChEBI" id="CHEBI:18420"/>
        <label>2</label>
    </ligand>
</feature>
<feature type="binding site" evidence="1">
    <location>
        <position position="234"/>
    </location>
    <ligand>
        <name>Mg(2+)</name>
        <dbReference type="ChEBI" id="CHEBI:18420"/>
        <label>2</label>
    </ligand>
</feature>
<feature type="binding site" evidence="1">
    <location>
        <position position="255"/>
    </location>
    <ligand>
        <name>substrate</name>
    </ligand>
</feature>
<protein>
    <recommendedName>
        <fullName evidence="1">Ketol-acid reductoisomerase (NADP(+))</fullName>
        <shortName evidence="1">KARI</shortName>
        <ecNumber evidence="1">1.1.1.86</ecNumber>
    </recommendedName>
    <alternativeName>
        <fullName evidence="1">Acetohydroxy-acid isomeroreductase</fullName>
        <shortName evidence="1">AHIR</shortName>
    </alternativeName>
    <alternativeName>
        <fullName evidence="1">Alpha-keto-beta-hydroxylacyl reductoisomerase</fullName>
    </alternativeName>
    <alternativeName>
        <fullName evidence="1">Ketol-acid reductoisomerase type 1</fullName>
    </alternativeName>
    <alternativeName>
        <fullName evidence="1">Ketol-acid reductoisomerase type I</fullName>
    </alternativeName>
</protein>
<evidence type="ECO:0000255" key="1">
    <source>
        <dbReference type="HAMAP-Rule" id="MF_00435"/>
    </source>
</evidence>
<evidence type="ECO:0000255" key="2">
    <source>
        <dbReference type="PROSITE-ProRule" id="PRU01197"/>
    </source>
</evidence>
<evidence type="ECO:0000255" key="3">
    <source>
        <dbReference type="PROSITE-ProRule" id="PRU01198"/>
    </source>
</evidence>
<organism>
    <name type="scientific">Saccharolobus islandicus (strain L.S.2.15 / Lassen #1)</name>
    <name type="common">Sulfolobus islandicus</name>
    <dbReference type="NCBI Taxonomy" id="429572"/>
    <lineage>
        <taxon>Archaea</taxon>
        <taxon>Thermoproteota</taxon>
        <taxon>Thermoprotei</taxon>
        <taxon>Sulfolobales</taxon>
        <taxon>Sulfolobaceae</taxon>
        <taxon>Saccharolobus</taxon>
    </lineage>
</organism>
<reference key="1">
    <citation type="journal article" date="2009" name="Proc. Natl. Acad. Sci. U.S.A.">
        <title>Biogeography of the Sulfolobus islandicus pan-genome.</title>
        <authorList>
            <person name="Reno M.L."/>
            <person name="Held N.L."/>
            <person name="Fields C.J."/>
            <person name="Burke P.V."/>
            <person name="Whitaker R.J."/>
        </authorList>
    </citation>
    <scope>NUCLEOTIDE SEQUENCE [LARGE SCALE GENOMIC DNA]</scope>
    <source>
        <strain>L.S.2.15 / Lassen #1</strain>
    </source>
</reference>
<comment type="function">
    <text evidence="1">Involved in the biosynthesis of branched-chain amino acids (BCAA). Catalyzes an alkyl-migration followed by a ketol-acid reduction of (S)-2-acetolactate (S2AL) to yield (R)-2,3-dihydroxy-isovalerate. In the isomerase reaction, S2AL is rearranged via a Mg-dependent methyl migration to produce 3-hydroxy-3-methyl-2-ketobutyrate (HMKB). In the reductase reaction, this 2-ketoacid undergoes a metal-dependent reduction by NADPH to yield (R)-2,3-dihydroxy-isovalerate.</text>
</comment>
<comment type="catalytic activity">
    <reaction evidence="1">
        <text>(2R)-2,3-dihydroxy-3-methylbutanoate + NADP(+) = (2S)-2-acetolactate + NADPH + H(+)</text>
        <dbReference type="Rhea" id="RHEA:22068"/>
        <dbReference type="ChEBI" id="CHEBI:15378"/>
        <dbReference type="ChEBI" id="CHEBI:49072"/>
        <dbReference type="ChEBI" id="CHEBI:57783"/>
        <dbReference type="ChEBI" id="CHEBI:58349"/>
        <dbReference type="ChEBI" id="CHEBI:58476"/>
        <dbReference type="EC" id="1.1.1.86"/>
    </reaction>
</comment>
<comment type="catalytic activity">
    <reaction evidence="1">
        <text>(2R,3R)-2,3-dihydroxy-3-methylpentanoate + NADP(+) = (S)-2-ethyl-2-hydroxy-3-oxobutanoate + NADPH + H(+)</text>
        <dbReference type="Rhea" id="RHEA:13493"/>
        <dbReference type="ChEBI" id="CHEBI:15378"/>
        <dbReference type="ChEBI" id="CHEBI:49256"/>
        <dbReference type="ChEBI" id="CHEBI:49258"/>
        <dbReference type="ChEBI" id="CHEBI:57783"/>
        <dbReference type="ChEBI" id="CHEBI:58349"/>
        <dbReference type="EC" id="1.1.1.86"/>
    </reaction>
</comment>
<comment type="cofactor">
    <cofactor evidence="1">
        <name>Mg(2+)</name>
        <dbReference type="ChEBI" id="CHEBI:18420"/>
    </cofactor>
    <text evidence="1">Binds 2 magnesium ions per subunit.</text>
</comment>
<comment type="pathway">
    <text evidence="1">Amino-acid biosynthesis; L-isoleucine biosynthesis; L-isoleucine from 2-oxobutanoate: step 2/4.</text>
</comment>
<comment type="pathway">
    <text evidence="1">Amino-acid biosynthesis; L-valine biosynthesis; L-valine from pyruvate: step 2/4.</text>
</comment>
<comment type="similarity">
    <text evidence="1">Belongs to the ketol-acid reductoisomerase family.</text>
</comment>
<dbReference type="EC" id="1.1.1.86" evidence="1"/>
<dbReference type="EMBL" id="CP001399">
    <property type="protein sequence ID" value="ACP35667.1"/>
    <property type="molecule type" value="Genomic_DNA"/>
</dbReference>
<dbReference type="RefSeq" id="WP_012713816.1">
    <property type="nucleotide sequence ID" value="NC_012589.1"/>
</dbReference>
<dbReference type="SMR" id="C3MQK4"/>
<dbReference type="GeneID" id="7799297"/>
<dbReference type="KEGG" id="sis:LS215_1663"/>
<dbReference type="HOGENOM" id="CLU_033821_0_1_2"/>
<dbReference type="OrthoDB" id="6064at2157"/>
<dbReference type="UniPathway" id="UPA00047">
    <property type="reaction ID" value="UER00056"/>
</dbReference>
<dbReference type="UniPathway" id="UPA00049">
    <property type="reaction ID" value="UER00060"/>
</dbReference>
<dbReference type="Proteomes" id="UP000001747">
    <property type="component" value="Chromosome"/>
</dbReference>
<dbReference type="GO" id="GO:0004455">
    <property type="term" value="F:ketol-acid reductoisomerase activity"/>
    <property type="evidence" value="ECO:0007669"/>
    <property type="project" value="UniProtKB-UniRule"/>
</dbReference>
<dbReference type="GO" id="GO:0000287">
    <property type="term" value="F:magnesium ion binding"/>
    <property type="evidence" value="ECO:0007669"/>
    <property type="project" value="UniProtKB-UniRule"/>
</dbReference>
<dbReference type="GO" id="GO:0050661">
    <property type="term" value="F:NADP binding"/>
    <property type="evidence" value="ECO:0007669"/>
    <property type="project" value="InterPro"/>
</dbReference>
<dbReference type="GO" id="GO:0009097">
    <property type="term" value="P:isoleucine biosynthetic process"/>
    <property type="evidence" value="ECO:0007669"/>
    <property type="project" value="UniProtKB-UniRule"/>
</dbReference>
<dbReference type="GO" id="GO:0009099">
    <property type="term" value="P:L-valine biosynthetic process"/>
    <property type="evidence" value="ECO:0007669"/>
    <property type="project" value="UniProtKB-UniRule"/>
</dbReference>
<dbReference type="FunFam" id="3.40.50.720:FF:000023">
    <property type="entry name" value="Ketol-acid reductoisomerase (NADP(+))"/>
    <property type="match status" value="1"/>
</dbReference>
<dbReference type="Gene3D" id="6.10.240.10">
    <property type="match status" value="1"/>
</dbReference>
<dbReference type="Gene3D" id="3.40.50.720">
    <property type="entry name" value="NAD(P)-binding Rossmann-like Domain"/>
    <property type="match status" value="1"/>
</dbReference>
<dbReference type="HAMAP" id="MF_00435">
    <property type="entry name" value="IlvC"/>
    <property type="match status" value="1"/>
</dbReference>
<dbReference type="InterPro" id="IPR008927">
    <property type="entry name" value="6-PGluconate_DH-like_C_sf"/>
</dbReference>
<dbReference type="InterPro" id="IPR013023">
    <property type="entry name" value="KARI"/>
</dbReference>
<dbReference type="InterPro" id="IPR000506">
    <property type="entry name" value="KARI_C"/>
</dbReference>
<dbReference type="InterPro" id="IPR013116">
    <property type="entry name" value="KARI_N"/>
</dbReference>
<dbReference type="InterPro" id="IPR014359">
    <property type="entry name" value="KARI_prok"/>
</dbReference>
<dbReference type="InterPro" id="IPR036291">
    <property type="entry name" value="NAD(P)-bd_dom_sf"/>
</dbReference>
<dbReference type="NCBIfam" id="TIGR00465">
    <property type="entry name" value="ilvC"/>
    <property type="match status" value="1"/>
</dbReference>
<dbReference type="NCBIfam" id="NF004017">
    <property type="entry name" value="PRK05479.1"/>
    <property type="match status" value="1"/>
</dbReference>
<dbReference type="PANTHER" id="PTHR21371">
    <property type="entry name" value="KETOL-ACID REDUCTOISOMERASE, MITOCHONDRIAL"/>
    <property type="match status" value="1"/>
</dbReference>
<dbReference type="PANTHER" id="PTHR21371:SF1">
    <property type="entry name" value="KETOL-ACID REDUCTOISOMERASE, MITOCHONDRIAL"/>
    <property type="match status" value="1"/>
</dbReference>
<dbReference type="Pfam" id="PF01450">
    <property type="entry name" value="KARI_C"/>
    <property type="match status" value="1"/>
</dbReference>
<dbReference type="Pfam" id="PF07991">
    <property type="entry name" value="KARI_N"/>
    <property type="match status" value="1"/>
</dbReference>
<dbReference type="PIRSF" id="PIRSF000116">
    <property type="entry name" value="IlvC_gammaproteo"/>
    <property type="match status" value="1"/>
</dbReference>
<dbReference type="SUPFAM" id="SSF48179">
    <property type="entry name" value="6-phosphogluconate dehydrogenase C-terminal domain-like"/>
    <property type="match status" value="1"/>
</dbReference>
<dbReference type="SUPFAM" id="SSF51735">
    <property type="entry name" value="NAD(P)-binding Rossmann-fold domains"/>
    <property type="match status" value="1"/>
</dbReference>
<dbReference type="PROSITE" id="PS51851">
    <property type="entry name" value="KARI_C"/>
    <property type="match status" value="1"/>
</dbReference>
<dbReference type="PROSITE" id="PS51850">
    <property type="entry name" value="KARI_N"/>
    <property type="match status" value="1"/>
</dbReference>
<gene>
    <name evidence="1" type="primary">ilvC</name>
    <name type="ordered locus">LS215_1663</name>
</gene>
<proteinExistence type="inferred from homology"/>